<keyword id="KW-0687">Ribonucleoprotein</keyword>
<keyword id="KW-0689">Ribosomal protein</keyword>
<keyword id="KW-0694">RNA-binding</keyword>
<keyword id="KW-0699">rRNA-binding</keyword>
<protein>
    <recommendedName>
        <fullName evidence="1">Small ribosomal subunit protein uS3</fullName>
    </recommendedName>
    <alternativeName>
        <fullName evidence="2">30S ribosomal protein S3</fullName>
    </alternativeName>
</protein>
<gene>
    <name evidence="1" type="primary">rpsC</name>
    <name evidence="1" type="synonym">rps3</name>
</gene>
<feature type="chain" id="PRO_0000130189" description="Small ribosomal subunit protein uS3">
    <location>
        <begin position="1"/>
        <end position="250"/>
    </location>
</feature>
<feature type="domain" description="KH type-2" evidence="1">
    <location>
        <begin position="39"/>
        <end position="111"/>
    </location>
</feature>
<organism>
    <name type="scientific">Rubus stunt phytoplasma</name>
    <dbReference type="NCBI Taxonomy" id="72996"/>
    <lineage>
        <taxon>Bacteria</taxon>
        <taxon>Bacillati</taxon>
        <taxon>Mycoplasmatota</taxon>
        <taxon>Mollicutes</taxon>
        <taxon>Acholeplasmatales</taxon>
        <taxon>Acholeplasmataceae</taxon>
        <taxon>Candidatus Phytoplasma</taxon>
        <taxon>16SrV (Elm yellows group)</taxon>
    </lineage>
</organism>
<sequence>MGQKSNPNGLRLGIIRTWESKWYDVDKKVPFLVGEDFKIRTLIKNHYPKSTISQIEIKRLKKSNDEFIEIDLYTSKIGIIQGPENKNKNSLINKIEKLINKKVQINIFEVKAINKIAVLVAQNIAMQLQQRAFYKAVLKSAIQKALKSGIKGIKIIITGRLGGAEKARRDSISMGVVPLNTLRADIDYAFEEAHTTYGVLGVKVIINHGEVLPNKTIADTRQIFSSQYENKKNNNKRHFVDKKNFKKNTS</sequence>
<evidence type="ECO:0000255" key="1">
    <source>
        <dbReference type="HAMAP-Rule" id="MF_01309"/>
    </source>
</evidence>
<evidence type="ECO:0000305" key="2"/>
<reference key="1">
    <citation type="journal article" date="2002" name="Mol. Cell. Probes">
        <title>Genetic variability among flavescence doree phytoplasmas from different origins in Italy and France.</title>
        <authorList>
            <person name="Martini M."/>
            <person name="Botti S."/>
            <person name="Marcone C."/>
            <person name="Marzachi C."/>
            <person name="Casati P."/>
            <person name="Bianco P.A."/>
            <person name="Benedetti R."/>
            <person name="Bertaccini A."/>
        </authorList>
    </citation>
    <scope>NUCLEOTIDE SEQUENCE [GENOMIC DNA]</scope>
    <source>
        <strain>RuS</strain>
    </source>
</reference>
<comment type="function">
    <text evidence="1">Binds the lower part of the 30S subunit head. Binds mRNA in the 70S ribosome, positioning it for translation.</text>
</comment>
<comment type="subunit">
    <text evidence="1">Part of the 30S ribosomal subunit. Forms a tight complex with proteins S10 and S14.</text>
</comment>
<comment type="similarity">
    <text evidence="1">Belongs to the universal ribosomal protein uS3 family.</text>
</comment>
<name>RS3_RUBST</name>
<proteinExistence type="inferred from homology"/>
<dbReference type="EMBL" id="AF396944">
    <property type="protein sequence ID" value="AAL57332.1"/>
    <property type="molecule type" value="Genomic_DNA"/>
</dbReference>
<dbReference type="SMR" id="Q8VS60"/>
<dbReference type="GO" id="GO:0022627">
    <property type="term" value="C:cytosolic small ribosomal subunit"/>
    <property type="evidence" value="ECO:0007669"/>
    <property type="project" value="TreeGrafter"/>
</dbReference>
<dbReference type="GO" id="GO:0003729">
    <property type="term" value="F:mRNA binding"/>
    <property type="evidence" value="ECO:0007669"/>
    <property type="project" value="UniProtKB-UniRule"/>
</dbReference>
<dbReference type="GO" id="GO:0019843">
    <property type="term" value="F:rRNA binding"/>
    <property type="evidence" value="ECO:0007669"/>
    <property type="project" value="UniProtKB-UniRule"/>
</dbReference>
<dbReference type="GO" id="GO:0003735">
    <property type="term" value="F:structural constituent of ribosome"/>
    <property type="evidence" value="ECO:0007669"/>
    <property type="project" value="InterPro"/>
</dbReference>
<dbReference type="GO" id="GO:0006412">
    <property type="term" value="P:translation"/>
    <property type="evidence" value="ECO:0007669"/>
    <property type="project" value="UniProtKB-UniRule"/>
</dbReference>
<dbReference type="CDD" id="cd02412">
    <property type="entry name" value="KH-II_30S_S3"/>
    <property type="match status" value="1"/>
</dbReference>
<dbReference type="Gene3D" id="3.30.300.20">
    <property type="match status" value="1"/>
</dbReference>
<dbReference type="Gene3D" id="3.30.1140.32">
    <property type="entry name" value="Ribosomal protein S3, C-terminal domain"/>
    <property type="match status" value="1"/>
</dbReference>
<dbReference type="HAMAP" id="MF_01309_B">
    <property type="entry name" value="Ribosomal_uS3_B"/>
    <property type="match status" value="1"/>
</dbReference>
<dbReference type="InterPro" id="IPR015946">
    <property type="entry name" value="KH_dom-like_a/b"/>
</dbReference>
<dbReference type="InterPro" id="IPR004044">
    <property type="entry name" value="KH_dom_type_2"/>
</dbReference>
<dbReference type="InterPro" id="IPR009019">
    <property type="entry name" value="KH_sf_prok-type"/>
</dbReference>
<dbReference type="InterPro" id="IPR036419">
    <property type="entry name" value="Ribosomal_S3_C_sf"/>
</dbReference>
<dbReference type="InterPro" id="IPR005704">
    <property type="entry name" value="Ribosomal_uS3_bac-typ"/>
</dbReference>
<dbReference type="InterPro" id="IPR001351">
    <property type="entry name" value="Ribosomal_uS3_C"/>
</dbReference>
<dbReference type="InterPro" id="IPR018280">
    <property type="entry name" value="Ribosomal_uS3_CS"/>
</dbReference>
<dbReference type="NCBIfam" id="TIGR01009">
    <property type="entry name" value="rpsC_bact"/>
    <property type="match status" value="1"/>
</dbReference>
<dbReference type="PANTHER" id="PTHR11760">
    <property type="entry name" value="30S/40S RIBOSOMAL PROTEIN S3"/>
    <property type="match status" value="1"/>
</dbReference>
<dbReference type="PANTHER" id="PTHR11760:SF19">
    <property type="entry name" value="SMALL RIBOSOMAL SUBUNIT PROTEIN US3C"/>
    <property type="match status" value="1"/>
</dbReference>
<dbReference type="Pfam" id="PF00189">
    <property type="entry name" value="Ribosomal_S3_C"/>
    <property type="match status" value="1"/>
</dbReference>
<dbReference type="SUPFAM" id="SSF54814">
    <property type="entry name" value="Prokaryotic type KH domain (KH-domain type II)"/>
    <property type="match status" value="1"/>
</dbReference>
<dbReference type="SUPFAM" id="SSF54821">
    <property type="entry name" value="Ribosomal protein S3 C-terminal domain"/>
    <property type="match status" value="1"/>
</dbReference>
<dbReference type="PROSITE" id="PS50823">
    <property type="entry name" value="KH_TYPE_2"/>
    <property type="match status" value="1"/>
</dbReference>
<dbReference type="PROSITE" id="PS00548">
    <property type="entry name" value="RIBOSOMAL_S3"/>
    <property type="match status" value="1"/>
</dbReference>
<accession>Q8VS60</accession>